<name>DSBB_XANAC</name>
<organism>
    <name type="scientific">Xanthomonas axonopodis pv. citri (strain 306)</name>
    <dbReference type="NCBI Taxonomy" id="190486"/>
    <lineage>
        <taxon>Bacteria</taxon>
        <taxon>Pseudomonadati</taxon>
        <taxon>Pseudomonadota</taxon>
        <taxon>Gammaproteobacteria</taxon>
        <taxon>Lysobacterales</taxon>
        <taxon>Lysobacteraceae</taxon>
        <taxon>Xanthomonas</taxon>
    </lineage>
</organism>
<dbReference type="EMBL" id="AE008923">
    <property type="protein sequence ID" value="AAM35881.1"/>
    <property type="molecule type" value="Genomic_DNA"/>
</dbReference>
<dbReference type="RefSeq" id="WP_003486663.1">
    <property type="nucleotide sequence ID" value="NC_003919.1"/>
</dbReference>
<dbReference type="SMR" id="Q8PNQ6"/>
<dbReference type="KEGG" id="xac:XAC0998"/>
<dbReference type="eggNOG" id="COG1495">
    <property type="taxonomic scope" value="Bacteria"/>
</dbReference>
<dbReference type="HOGENOM" id="CLU_098660_1_1_6"/>
<dbReference type="Proteomes" id="UP000000576">
    <property type="component" value="Chromosome"/>
</dbReference>
<dbReference type="GO" id="GO:0005886">
    <property type="term" value="C:plasma membrane"/>
    <property type="evidence" value="ECO:0007669"/>
    <property type="project" value="UniProtKB-SubCell"/>
</dbReference>
<dbReference type="GO" id="GO:0009055">
    <property type="term" value="F:electron transfer activity"/>
    <property type="evidence" value="ECO:0007669"/>
    <property type="project" value="UniProtKB-UniRule"/>
</dbReference>
<dbReference type="GO" id="GO:0015035">
    <property type="term" value="F:protein-disulfide reductase activity"/>
    <property type="evidence" value="ECO:0007669"/>
    <property type="project" value="UniProtKB-UniRule"/>
</dbReference>
<dbReference type="GO" id="GO:0006457">
    <property type="term" value="P:protein folding"/>
    <property type="evidence" value="ECO:0007669"/>
    <property type="project" value="InterPro"/>
</dbReference>
<dbReference type="FunFam" id="1.20.1550.10:FF:000004">
    <property type="entry name" value="Disulfide bond formation protein B"/>
    <property type="match status" value="1"/>
</dbReference>
<dbReference type="Gene3D" id="1.20.1550.10">
    <property type="entry name" value="DsbB-like"/>
    <property type="match status" value="1"/>
</dbReference>
<dbReference type="HAMAP" id="MF_00286">
    <property type="entry name" value="DsbB"/>
    <property type="match status" value="1"/>
</dbReference>
<dbReference type="InterPro" id="IPR003752">
    <property type="entry name" value="DiS_bond_form_DsbB/BdbC"/>
</dbReference>
<dbReference type="InterPro" id="IPR022920">
    <property type="entry name" value="Disulphide_bond_form_DsbB"/>
</dbReference>
<dbReference type="InterPro" id="IPR050183">
    <property type="entry name" value="DsbB"/>
</dbReference>
<dbReference type="InterPro" id="IPR023380">
    <property type="entry name" value="DsbB-like_sf"/>
</dbReference>
<dbReference type="NCBIfam" id="NF003354">
    <property type="entry name" value="PRK04388.1"/>
    <property type="match status" value="1"/>
</dbReference>
<dbReference type="PANTHER" id="PTHR36570">
    <property type="entry name" value="DISULFIDE BOND FORMATION PROTEIN B"/>
    <property type="match status" value="1"/>
</dbReference>
<dbReference type="PANTHER" id="PTHR36570:SF3">
    <property type="entry name" value="DISULFIDE BOND FORMATION PROTEIN B"/>
    <property type="match status" value="1"/>
</dbReference>
<dbReference type="Pfam" id="PF02600">
    <property type="entry name" value="DsbB"/>
    <property type="match status" value="1"/>
</dbReference>
<dbReference type="SUPFAM" id="SSF158442">
    <property type="entry name" value="DsbB-like"/>
    <property type="match status" value="1"/>
</dbReference>
<accession>Q8PNQ6</accession>
<evidence type="ECO:0000255" key="1">
    <source>
        <dbReference type="HAMAP-Rule" id="MF_00286"/>
    </source>
</evidence>
<feature type="chain" id="PRO_0000059365" description="Disulfide bond formation protein B">
    <location>
        <begin position="1"/>
        <end position="172"/>
    </location>
</feature>
<feature type="topological domain" description="Cytoplasmic" evidence="1">
    <location>
        <begin position="1"/>
        <end position="11"/>
    </location>
</feature>
<feature type="transmembrane region" description="Helical" evidence="1">
    <location>
        <begin position="12"/>
        <end position="28"/>
    </location>
</feature>
<feature type="topological domain" description="Periplasmic" evidence="1">
    <location>
        <begin position="29"/>
        <end position="46"/>
    </location>
</feature>
<feature type="transmembrane region" description="Helical" evidence="1">
    <location>
        <begin position="47"/>
        <end position="63"/>
    </location>
</feature>
<feature type="topological domain" description="Cytoplasmic" evidence="1">
    <location>
        <begin position="64"/>
        <end position="70"/>
    </location>
</feature>
<feature type="transmembrane region" description="Helical" evidence="1">
    <location>
        <begin position="71"/>
        <end position="88"/>
    </location>
</feature>
<feature type="topological domain" description="Periplasmic" evidence="1">
    <location>
        <begin position="89"/>
        <end position="145"/>
    </location>
</feature>
<feature type="transmembrane region" description="Helical" evidence="1">
    <location>
        <begin position="146"/>
        <end position="164"/>
    </location>
</feature>
<feature type="topological domain" description="Cytoplasmic" evidence="1">
    <location>
        <begin position="165"/>
        <end position="172"/>
    </location>
</feature>
<feature type="disulfide bond" description="Redox-active" evidence="1">
    <location>
        <begin position="38"/>
        <end position="41"/>
    </location>
</feature>
<feature type="disulfide bond" description="Redox-active" evidence="1">
    <location>
        <begin position="104"/>
        <end position="131"/>
    </location>
</feature>
<reference key="1">
    <citation type="journal article" date="2002" name="Nature">
        <title>Comparison of the genomes of two Xanthomonas pathogens with differing host specificities.</title>
        <authorList>
            <person name="da Silva A.C.R."/>
            <person name="Ferro J.A."/>
            <person name="Reinach F.C."/>
            <person name="Farah C.S."/>
            <person name="Furlan L.R."/>
            <person name="Quaggio R.B."/>
            <person name="Monteiro-Vitorello C.B."/>
            <person name="Van Sluys M.A."/>
            <person name="Almeida N.F. Jr."/>
            <person name="Alves L.M.C."/>
            <person name="do Amaral A.M."/>
            <person name="Bertolini M.C."/>
            <person name="Camargo L.E.A."/>
            <person name="Camarotte G."/>
            <person name="Cannavan F."/>
            <person name="Cardozo J."/>
            <person name="Chambergo F."/>
            <person name="Ciapina L.P."/>
            <person name="Cicarelli R.M.B."/>
            <person name="Coutinho L.L."/>
            <person name="Cursino-Santos J.R."/>
            <person name="El-Dorry H."/>
            <person name="Faria J.B."/>
            <person name="Ferreira A.J.S."/>
            <person name="Ferreira R.C.C."/>
            <person name="Ferro M.I.T."/>
            <person name="Formighieri E.F."/>
            <person name="Franco M.C."/>
            <person name="Greggio C.C."/>
            <person name="Gruber A."/>
            <person name="Katsuyama A.M."/>
            <person name="Kishi L.T."/>
            <person name="Leite R.P."/>
            <person name="Lemos E.G.M."/>
            <person name="Lemos M.V.F."/>
            <person name="Locali E.C."/>
            <person name="Machado M.A."/>
            <person name="Madeira A.M.B.N."/>
            <person name="Martinez-Rossi N.M."/>
            <person name="Martins E.C."/>
            <person name="Meidanis J."/>
            <person name="Menck C.F.M."/>
            <person name="Miyaki C.Y."/>
            <person name="Moon D.H."/>
            <person name="Moreira L.M."/>
            <person name="Novo M.T.M."/>
            <person name="Okura V.K."/>
            <person name="Oliveira M.C."/>
            <person name="Oliveira V.R."/>
            <person name="Pereira H.A."/>
            <person name="Rossi A."/>
            <person name="Sena J.A.D."/>
            <person name="Silva C."/>
            <person name="de Souza R.F."/>
            <person name="Spinola L.A.F."/>
            <person name="Takita M.A."/>
            <person name="Tamura R.E."/>
            <person name="Teixeira E.C."/>
            <person name="Tezza R.I.D."/>
            <person name="Trindade dos Santos M."/>
            <person name="Truffi D."/>
            <person name="Tsai S.M."/>
            <person name="White F.F."/>
            <person name="Setubal J.C."/>
            <person name="Kitajima J.P."/>
        </authorList>
    </citation>
    <scope>NUCLEOTIDE SEQUENCE [LARGE SCALE GENOMIC DNA]</scope>
    <source>
        <strain>306</strain>
    </source>
</reference>
<protein>
    <recommendedName>
        <fullName evidence="1">Disulfide bond formation protein B</fullName>
    </recommendedName>
    <alternativeName>
        <fullName evidence="1">Disulfide oxidoreductase</fullName>
    </alternativeName>
</protein>
<sequence>MNPFRWSFRAQFLLGFLACAGLLAYAIYVQLHLGLEPCPLCIFQRIAFAALAVFFLLGALHGPRAAAGRKVYGVLSFIAAGVGMGIAARHVWVQIRPKDMMSSCGPPLSFLSETMGPFEVFRTVLTGTGDCGNIDWRFLGLSMPMWSMVWFVGLALWALYAGFKVRRSSVHH</sequence>
<comment type="function">
    <text evidence="1">Required for disulfide bond formation in some periplasmic proteins. Acts by oxidizing the DsbA protein.</text>
</comment>
<comment type="subcellular location">
    <subcellularLocation>
        <location evidence="1">Cell inner membrane</location>
        <topology evidence="1">Multi-pass membrane protein</topology>
    </subcellularLocation>
</comment>
<comment type="similarity">
    <text evidence="1">Belongs to the DsbB family.</text>
</comment>
<keyword id="KW-0997">Cell inner membrane</keyword>
<keyword id="KW-1003">Cell membrane</keyword>
<keyword id="KW-0143">Chaperone</keyword>
<keyword id="KW-1015">Disulfide bond</keyword>
<keyword id="KW-0249">Electron transport</keyword>
<keyword id="KW-0472">Membrane</keyword>
<keyword id="KW-0560">Oxidoreductase</keyword>
<keyword id="KW-0676">Redox-active center</keyword>
<keyword id="KW-0812">Transmembrane</keyword>
<keyword id="KW-1133">Transmembrane helix</keyword>
<keyword id="KW-0813">Transport</keyword>
<gene>
    <name evidence="1" type="primary">dsbB</name>
    <name type="ordered locus">XAC0998</name>
</gene>
<proteinExistence type="inferred from homology"/>